<accession>A2AJ88</accession>
<accession>A9YTK0</accession>
<accession>B0LS74</accession>
<accession>B0ZTC6</accession>
<accession>B9EJ75</accession>
<accession>Q3TD21</accession>
<accession>Q3UFP1</accession>
<accession>Q66JS2</accession>
<accession>Q6P3F9</accession>
<accession>Q8BTY7</accession>
<accession>Q8R064</accession>
<accession>Q8R3C5</accession>
<reference key="1">
    <citation type="journal article" date="2005" name="Science">
        <title>The transcriptional landscape of the mammalian genome.</title>
        <authorList>
            <person name="Carninci P."/>
            <person name="Kasukawa T."/>
            <person name="Katayama S."/>
            <person name="Gough J."/>
            <person name="Frith M.C."/>
            <person name="Maeda N."/>
            <person name="Oyama R."/>
            <person name="Ravasi T."/>
            <person name="Lenhard B."/>
            <person name="Wells C."/>
            <person name="Kodzius R."/>
            <person name="Shimokawa K."/>
            <person name="Bajic V.B."/>
            <person name="Brenner S.E."/>
            <person name="Batalov S."/>
            <person name="Forrest A.R."/>
            <person name="Zavolan M."/>
            <person name="Davis M.J."/>
            <person name="Wilming L.G."/>
            <person name="Aidinis V."/>
            <person name="Allen J.E."/>
            <person name="Ambesi-Impiombato A."/>
            <person name="Apweiler R."/>
            <person name="Aturaliya R.N."/>
            <person name="Bailey T.L."/>
            <person name="Bansal M."/>
            <person name="Baxter L."/>
            <person name="Beisel K.W."/>
            <person name="Bersano T."/>
            <person name="Bono H."/>
            <person name="Chalk A.M."/>
            <person name="Chiu K.P."/>
            <person name="Choudhary V."/>
            <person name="Christoffels A."/>
            <person name="Clutterbuck D.R."/>
            <person name="Crowe M.L."/>
            <person name="Dalla E."/>
            <person name="Dalrymple B.P."/>
            <person name="de Bono B."/>
            <person name="Della Gatta G."/>
            <person name="di Bernardo D."/>
            <person name="Down T."/>
            <person name="Engstrom P."/>
            <person name="Fagiolini M."/>
            <person name="Faulkner G."/>
            <person name="Fletcher C.F."/>
            <person name="Fukushima T."/>
            <person name="Furuno M."/>
            <person name="Futaki S."/>
            <person name="Gariboldi M."/>
            <person name="Georgii-Hemming P."/>
            <person name="Gingeras T.R."/>
            <person name="Gojobori T."/>
            <person name="Green R.E."/>
            <person name="Gustincich S."/>
            <person name="Harbers M."/>
            <person name="Hayashi Y."/>
            <person name="Hensch T.K."/>
            <person name="Hirokawa N."/>
            <person name="Hill D."/>
            <person name="Huminiecki L."/>
            <person name="Iacono M."/>
            <person name="Ikeo K."/>
            <person name="Iwama A."/>
            <person name="Ishikawa T."/>
            <person name="Jakt M."/>
            <person name="Kanapin A."/>
            <person name="Katoh M."/>
            <person name="Kawasawa Y."/>
            <person name="Kelso J."/>
            <person name="Kitamura H."/>
            <person name="Kitano H."/>
            <person name="Kollias G."/>
            <person name="Krishnan S.P."/>
            <person name="Kruger A."/>
            <person name="Kummerfeld S.K."/>
            <person name="Kurochkin I.V."/>
            <person name="Lareau L.F."/>
            <person name="Lazarevic D."/>
            <person name="Lipovich L."/>
            <person name="Liu J."/>
            <person name="Liuni S."/>
            <person name="McWilliam S."/>
            <person name="Madan Babu M."/>
            <person name="Madera M."/>
            <person name="Marchionni L."/>
            <person name="Matsuda H."/>
            <person name="Matsuzawa S."/>
            <person name="Miki H."/>
            <person name="Mignone F."/>
            <person name="Miyake S."/>
            <person name="Morris K."/>
            <person name="Mottagui-Tabar S."/>
            <person name="Mulder N."/>
            <person name="Nakano N."/>
            <person name="Nakauchi H."/>
            <person name="Ng P."/>
            <person name="Nilsson R."/>
            <person name="Nishiguchi S."/>
            <person name="Nishikawa S."/>
            <person name="Nori F."/>
            <person name="Ohara O."/>
            <person name="Okazaki Y."/>
            <person name="Orlando V."/>
            <person name="Pang K.C."/>
            <person name="Pavan W.J."/>
            <person name="Pavesi G."/>
            <person name="Pesole G."/>
            <person name="Petrovsky N."/>
            <person name="Piazza S."/>
            <person name="Reed J."/>
            <person name="Reid J.F."/>
            <person name="Ring B.Z."/>
            <person name="Ringwald M."/>
            <person name="Rost B."/>
            <person name="Ruan Y."/>
            <person name="Salzberg S.L."/>
            <person name="Sandelin A."/>
            <person name="Schneider C."/>
            <person name="Schoenbach C."/>
            <person name="Sekiguchi K."/>
            <person name="Semple C.A."/>
            <person name="Seno S."/>
            <person name="Sessa L."/>
            <person name="Sheng Y."/>
            <person name="Shibata Y."/>
            <person name="Shimada H."/>
            <person name="Shimada K."/>
            <person name="Silva D."/>
            <person name="Sinclair B."/>
            <person name="Sperling S."/>
            <person name="Stupka E."/>
            <person name="Sugiura K."/>
            <person name="Sultana R."/>
            <person name="Takenaka Y."/>
            <person name="Taki K."/>
            <person name="Tammoja K."/>
            <person name="Tan S.L."/>
            <person name="Tang S."/>
            <person name="Taylor M.S."/>
            <person name="Tegner J."/>
            <person name="Teichmann S.A."/>
            <person name="Ueda H.R."/>
            <person name="van Nimwegen E."/>
            <person name="Verardo R."/>
            <person name="Wei C.L."/>
            <person name="Yagi K."/>
            <person name="Yamanishi H."/>
            <person name="Zabarovsky E."/>
            <person name="Zhu S."/>
            <person name="Zimmer A."/>
            <person name="Hide W."/>
            <person name="Bult C."/>
            <person name="Grimmond S.M."/>
            <person name="Teasdale R.D."/>
            <person name="Liu E.T."/>
            <person name="Brusic V."/>
            <person name="Quackenbush J."/>
            <person name="Wahlestedt C."/>
            <person name="Mattick J.S."/>
            <person name="Hume D.A."/>
            <person name="Kai C."/>
            <person name="Sasaki D."/>
            <person name="Tomaru Y."/>
            <person name="Fukuda S."/>
            <person name="Kanamori-Katayama M."/>
            <person name="Suzuki M."/>
            <person name="Aoki J."/>
            <person name="Arakawa T."/>
            <person name="Iida J."/>
            <person name="Imamura K."/>
            <person name="Itoh M."/>
            <person name="Kato T."/>
            <person name="Kawaji H."/>
            <person name="Kawagashira N."/>
            <person name="Kawashima T."/>
            <person name="Kojima M."/>
            <person name="Kondo S."/>
            <person name="Konno H."/>
            <person name="Nakano K."/>
            <person name="Ninomiya N."/>
            <person name="Nishio T."/>
            <person name="Okada M."/>
            <person name="Plessy C."/>
            <person name="Shibata K."/>
            <person name="Shiraki T."/>
            <person name="Suzuki S."/>
            <person name="Tagami M."/>
            <person name="Waki K."/>
            <person name="Watahiki A."/>
            <person name="Okamura-Oho Y."/>
            <person name="Suzuki H."/>
            <person name="Kawai J."/>
            <person name="Hayashizaki Y."/>
        </authorList>
    </citation>
    <scope>NUCLEOTIDE SEQUENCE [LARGE SCALE MRNA] (ISOFORM 1)</scope>
    <source>
        <strain>C57BL/6J</strain>
        <strain>NOD</strain>
        <tissue>Thymus</tissue>
    </source>
</reference>
<reference key="2">
    <citation type="journal article" date="2009" name="PLoS Biol.">
        <title>Lineage-specific biology revealed by a finished genome assembly of the mouse.</title>
        <authorList>
            <person name="Church D.M."/>
            <person name="Goodstadt L."/>
            <person name="Hillier L.W."/>
            <person name="Zody M.C."/>
            <person name="Goldstein S."/>
            <person name="She X."/>
            <person name="Bult C.J."/>
            <person name="Agarwala R."/>
            <person name="Cherry J.L."/>
            <person name="DiCuccio M."/>
            <person name="Hlavina W."/>
            <person name="Kapustin Y."/>
            <person name="Meric P."/>
            <person name="Maglott D."/>
            <person name="Birtle Z."/>
            <person name="Marques A.C."/>
            <person name="Graves T."/>
            <person name="Zhou S."/>
            <person name="Teague B."/>
            <person name="Potamousis K."/>
            <person name="Churas C."/>
            <person name="Place M."/>
            <person name="Herschleb J."/>
            <person name="Runnheim R."/>
            <person name="Forrest D."/>
            <person name="Amos-Landgraf J."/>
            <person name="Schwartz D.C."/>
            <person name="Cheng Z."/>
            <person name="Lindblad-Toh K."/>
            <person name="Eichler E.E."/>
            <person name="Ponting C.P."/>
        </authorList>
    </citation>
    <scope>NUCLEOTIDE SEQUENCE [LARGE SCALE GENOMIC DNA]</scope>
    <source>
        <strain>C57BL/6J</strain>
    </source>
</reference>
<reference key="3">
    <citation type="journal article" date="2004" name="Genome Res.">
        <title>The status, quality, and expansion of the NIH full-length cDNA project: the Mammalian Gene Collection (MGC).</title>
        <authorList>
            <consortium name="The MGC Project Team"/>
        </authorList>
    </citation>
    <scope>NUCLEOTIDE SEQUENCE [LARGE SCALE MRNA] (ISOFORM 1)</scope>
    <scope>NUCLEOTIDE SEQUENCE [LARGE SCALE MRNA] OF 801-1352 (ISOFORM 2)</scope>
    <source>
        <strain>129</strain>
        <strain>FVB/N</strain>
        <tissue>Limb</tissue>
        <tissue>Mammary tumor</tissue>
    </source>
</reference>
<reference key="4">
    <citation type="journal article" date="2012" name="Gene">
        <title>Identification of two novel splicing variants of murine NTE-related esterase.</title>
        <authorList>
            <person name="Chang P.A."/>
            <person name="Wang Z.X."/>
            <person name="Long D.X."/>
            <person name="Qin W.Z."/>
            <person name="Wei C.Y."/>
            <person name="Wu Y.J."/>
        </authorList>
    </citation>
    <scope>NUCLEOTIDE SEQUENCE [MRNA] OF 27-1352 (ISOFORMS 1; 2 AND 3)</scope>
    <scope>FUNCTION</scope>
    <scope>CATALYTIC ACTIVITY</scope>
    <scope>SUBCELLULAR LOCATION</scope>
    <scope>TISSUE SPECIFICITY</scope>
    <scope>INDUCTION</scope>
    <source>
        <strain>Kunming</strain>
        <tissue>Brain</tissue>
    </source>
</reference>
<reference key="5">
    <citation type="journal article" date="2007" name="Proc. Natl. Acad. Sci. U.S.A.">
        <title>Large-scale phosphorylation analysis of mouse liver.</title>
        <authorList>
            <person name="Villen J."/>
            <person name="Beausoleil S.A."/>
            <person name="Gerber S.A."/>
            <person name="Gygi S.P."/>
        </authorList>
    </citation>
    <scope>PHOSPHORYLATION [LARGE SCALE ANALYSIS] AT SER-341</scope>
    <scope>IDENTIFICATION BY MASS SPECTROMETRY [LARGE SCALE ANALYSIS]</scope>
    <source>
        <tissue>Liver</tissue>
    </source>
</reference>
<reference key="6">
    <citation type="journal article" date="2008" name="J. Biol. Chem.">
        <title>Identification of an insulin-regulated lysophospholipase with homology to neuropathy target esterase.</title>
        <authorList>
            <person name="Kienesberger P.C."/>
            <person name="Lass A."/>
            <person name="Preiss-Landl K."/>
            <person name="Wolinski H."/>
            <person name="Kohlwein S.D."/>
            <person name="Zimmermann R."/>
            <person name="Zechner R."/>
        </authorList>
    </citation>
    <scope>FUNCTION</scope>
    <scope>CATALYTIC ACTIVITY</scope>
    <scope>BIOPHYSICOCHEMICAL PROPERTIES</scope>
    <scope>ACTIVITY REGULATION</scope>
    <scope>SUBCELLULAR LOCATION</scope>
    <scope>TISSUE SPECIFICITY</scope>
    <scope>INDUCTION</scope>
</reference>
<reference key="7">
    <citation type="journal article" date="2010" name="Cell">
        <title>A tissue-specific atlas of mouse protein phosphorylation and expression.</title>
        <authorList>
            <person name="Huttlin E.L."/>
            <person name="Jedrychowski M.P."/>
            <person name="Elias J.E."/>
            <person name="Goswami T."/>
            <person name="Rad R."/>
            <person name="Beausoleil S.A."/>
            <person name="Villen J."/>
            <person name="Haas W."/>
            <person name="Sowa M.E."/>
            <person name="Gygi S.P."/>
        </authorList>
    </citation>
    <scope>PHOSPHORYLATION [LARGE SCALE ANALYSIS] AT SER-1280</scope>
    <scope>IDENTIFICATION BY MASS SPECTROMETRY [LARGE SCALE ANALYSIS]</scope>
    <source>
        <tissue>Spleen</tissue>
        <tissue>Testis</tissue>
    </source>
</reference>
<reference key="8">
    <citation type="journal article" date="2017" name="J. Biol. Chem.">
        <title>The phospholipase PNPLA7 functions as a lysophosphatidylcholine hydrolase and interacts with lipid droplets through its catalytic domain.</title>
        <authorList>
            <person name="Heier C."/>
            <person name="Kien B."/>
            <person name="Huang F."/>
            <person name="Eichmann T.O."/>
            <person name="Xie H."/>
            <person name="Zechner R."/>
            <person name="Chang P.A."/>
        </authorList>
    </citation>
    <scope>FUNCTION</scope>
    <scope>CATALYTIC ACTIVITY</scope>
    <scope>ACTIVITY REGULATION</scope>
    <scope>SUBCELLULAR LOCATION</scope>
    <scope>TOPOLOGY</scope>
</reference>
<protein>
    <recommendedName>
        <fullName>Patatin-like phospholipase domain-containing protein 7</fullName>
        <ecNumber evidence="7 8 9">3.1.1.-</ecNumber>
        <ecNumber evidence="7 9">3.1.1.5</ecNumber>
    </recommendedName>
    <alternativeName>
        <fullName>Neuropathy target esterase-related esterase</fullName>
        <shortName>NRE</shortName>
        <shortName>NTE-related esterase</shortName>
    </alternativeName>
</protein>
<dbReference type="EC" id="3.1.1.-" evidence="7 8 9"/>
<dbReference type="EC" id="3.1.1.5" evidence="7 9"/>
<dbReference type="EMBL" id="AK088362">
    <property type="protein sequence ID" value="BAC40302.1"/>
    <property type="status" value="ALT_INIT"/>
    <property type="molecule type" value="mRNA"/>
</dbReference>
<dbReference type="EMBL" id="AK148380">
    <property type="protein sequence ID" value="BAE28519.1"/>
    <property type="status" value="ALT_INIT"/>
    <property type="molecule type" value="mRNA"/>
</dbReference>
<dbReference type="EMBL" id="AK170417">
    <property type="protein sequence ID" value="BAE41783.1"/>
    <property type="status" value="ALT_INIT"/>
    <property type="molecule type" value="mRNA"/>
</dbReference>
<dbReference type="EMBL" id="AL732585">
    <property type="status" value="NOT_ANNOTATED_CDS"/>
    <property type="molecule type" value="Genomic_DNA"/>
</dbReference>
<dbReference type="EMBL" id="BC025621">
    <property type="protein sequence ID" value="AAH25621.1"/>
    <property type="molecule type" value="mRNA"/>
</dbReference>
<dbReference type="EMBL" id="BC027342">
    <property type="protein sequence ID" value="AAH27342.1"/>
    <property type="status" value="ALT_SEQ"/>
    <property type="molecule type" value="mRNA"/>
</dbReference>
<dbReference type="EMBL" id="BC064003">
    <property type="protein sequence ID" value="AAH64003.1"/>
    <property type="molecule type" value="mRNA"/>
</dbReference>
<dbReference type="EMBL" id="BC080793">
    <property type="protein sequence ID" value="AAH80793.1"/>
    <property type="molecule type" value="mRNA"/>
</dbReference>
<dbReference type="EMBL" id="BC141365">
    <property type="protein sequence ID" value="AAI41366.1"/>
    <property type="status" value="ALT_INIT"/>
    <property type="molecule type" value="mRNA"/>
</dbReference>
<dbReference type="EMBL" id="BC141366">
    <property type="protein sequence ID" value="AAI41367.1"/>
    <property type="status" value="ALT_INIT"/>
    <property type="molecule type" value="mRNA"/>
</dbReference>
<dbReference type="EMBL" id="EU293208">
    <property type="protein sequence ID" value="ABX89593.1"/>
    <property type="molecule type" value="mRNA"/>
</dbReference>
<dbReference type="EMBL" id="EU368675">
    <property type="protein sequence ID" value="ABY82074.1"/>
    <property type="molecule type" value="mRNA"/>
</dbReference>
<dbReference type="EMBL" id="EU402948">
    <property type="protein sequence ID" value="ABY89725.2"/>
    <property type="molecule type" value="mRNA"/>
</dbReference>
<dbReference type="CCDS" id="CCDS50522.1">
    <molecule id="A2AJ88-1"/>
</dbReference>
<dbReference type="RefSeq" id="NP_666363.3">
    <molecule id="A2AJ88-1"/>
    <property type="nucleotide sequence ID" value="NM_146251.4"/>
</dbReference>
<dbReference type="RefSeq" id="XP_017173518.1">
    <property type="nucleotide sequence ID" value="XM_017318029.1"/>
</dbReference>
<dbReference type="RefSeq" id="XP_017173519.1">
    <molecule id="A2AJ88-2"/>
    <property type="nucleotide sequence ID" value="XM_017318030.3"/>
</dbReference>
<dbReference type="SMR" id="A2AJ88"/>
<dbReference type="BioGRID" id="232300">
    <property type="interactions" value="6"/>
</dbReference>
<dbReference type="FunCoup" id="A2AJ88">
    <property type="interactions" value="1149"/>
</dbReference>
<dbReference type="STRING" id="10090.ENSMUSP00000044078"/>
<dbReference type="ChEMBL" id="CHEMBL3259499"/>
<dbReference type="SwissLipids" id="SLP:000001853"/>
<dbReference type="GlyGen" id="A2AJ88">
    <property type="glycosylation" value="1 site, 1 N-linked glycan (1 site)"/>
</dbReference>
<dbReference type="iPTMnet" id="A2AJ88"/>
<dbReference type="PhosphoSitePlus" id="A2AJ88"/>
<dbReference type="jPOST" id="A2AJ88"/>
<dbReference type="PaxDb" id="10090-ENSMUSP00000044078"/>
<dbReference type="PeptideAtlas" id="A2AJ88"/>
<dbReference type="ProteomicsDB" id="289767">
    <molecule id="A2AJ88-1"/>
</dbReference>
<dbReference type="ProteomicsDB" id="289768">
    <molecule id="A2AJ88-2"/>
</dbReference>
<dbReference type="ProteomicsDB" id="289769">
    <molecule id="A2AJ88-3"/>
</dbReference>
<dbReference type="Pumba" id="A2AJ88"/>
<dbReference type="Antibodypedia" id="2428">
    <property type="antibodies" value="10 antibodies from 8 providers"/>
</dbReference>
<dbReference type="DNASU" id="241274"/>
<dbReference type="Ensembl" id="ENSMUST00000045295.14">
    <molecule id="A2AJ88-1"/>
    <property type="protein sequence ID" value="ENSMUSP00000044078.8"/>
    <property type="gene ID" value="ENSMUSG00000036833.17"/>
</dbReference>
<dbReference type="GeneID" id="241274"/>
<dbReference type="KEGG" id="mmu:241274"/>
<dbReference type="UCSC" id="uc008ipv.2">
    <molecule id="A2AJ88-1"/>
    <property type="organism name" value="mouse"/>
</dbReference>
<dbReference type="UCSC" id="uc012brs.1">
    <molecule id="A2AJ88-2"/>
    <property type="organism name" value="mouse"/>
</dbReference>
<dbReference type="AGR" id="MGI:2385325"/>
<dbReference type="CTD" id="375775"/>
<dbReference type="MGI" id="MGI:2385325">
    <property type="gene designation" value="Pnpla7"/>
</dbReference>
<dbReference type="VEuPathDB" id="HostDB:ENSMUSG00000036833"/>
<dbReference type="eggNOG" id="KOG2968">
    <property type="taxonomic scope" value="Eukaryota"/>
</dbReference>
<dbReference type="GeneTree" id="ENSGT00940000156763"/>
<dbReference type="HOGENOM" id="CLU_000960_1_0_1"/>
<dbReference type="InParanoid" id="A2AJ88"/>
<dbReference type="OMA" id="SSGYVWR"/>
<dbReference type="OrthoDB" id="421051at2759"/>
<dbReference type="PhylomeDB" id="A2AJ88"/>
<dbReference type="TreeFam" id="TF300519"/>
<dbReference type="BioGRID-ORCS" id="241274">
    <property type="hits" value="3 hits in 80 CRISPR screens"/>
</dbReference>
<dbReference type="ChiTaRS" id="Pnpla7">
    <property type="organism name" value="mouse"/>
</dbReference>
<dbReference type="PRO" id="PR:A2AJ88"/>
<dbReference type="Proteomes" id="UP000000589">
    <property type="component" value="Chromosome 2"/>
</dbReference>
<dbReference type="RNAct" id="A2AJ88">
    <property type="molecule type" value="protein"/>
</dbReference>
<dbReference type="Bgee" id="ENSMUSG00000036833">
    <property type="expression patterns" value="Expressed in left lobe of liver and 222 other cell types or tissues"/>
</dbReference>
<dbReference type="ExpressionAtlas" id="A2AJ88">
    <property type="expression patterns" value="baseline and differential"/>
</dbReference>
<dbReference type="GO" id="GO:0005783">
    <property type="term" value="C:endoplasmic reticulum"/>
    <property type="evidence" value="ECO:0000314"/>
    <property type="project" value="MGI"/>
</dbReference>
<dbReference type="GO" id="GO:0005789">
    <property type="term" value="C:endoplasmic reticulum membrane"/>
    <property type="evidence" value="ECO:0000314"/>
    <property type="project" value="UniProtKB"/>
</dbReference>
<dbReference type="GO" id="GO:0005811">
    <property type="term" value="C:lipid droplet"/>
    <property type="evidence" value="ECO:0000314"/>
    <property type="project" value="UniProtKB"/>
</dbReference>
<dbReference type="GO" id="GO:0004622">
    <property type="term" value="F:lysophospholipase activity"/>
    <property type="evidence" value="ECO:0000314"/>
    <property type="project" value="MGI"/>
</dbReference>
<dbReference type="GO" id="GO:0034638">
    <property type="term" value="P:phosphatidylcholine catabolic process"/>
    <property type="evidence" value="ECO:0000314"/>
    <property type="project" value="UniProtKB"/>
</dbReference>
<dbReference type="CDD" id="cd00038">
    <property type="entry name" value="CAP_ED"/>
    <property type="match status" value="3"/>
</dbReference>
<dbReference type="CDD" id="cd07225">
    <property type="entry name" value="Pat_PNPLA6_PNPLA7"/>
    <property type="match status" value="1"/>
</dbReference>
<dbReference type="FunFam" id="2.60.120.10:FF:000010">
    <property type="entry name" value="neuropathy target esterase isoform X1"/>
    <property type="match status" value="1"/>
</dbReference>
<dbReference type="FunFam" id="2.60.120.10:FF:000012">
    <property type="entry name" value="neuropathy target esterase isoform X2"/>
    <property type="match status" value="1"/>
</dbReference>
<dbReference type="FunFam" id="3.40.1090.10:FF:000001">
    <property type="entry name" value="neuropathy target esterase isoform X2"/>
    <property type="match status" value="1"/>
</dbReference>
<dbReference type="FunFam" id="2.60.120.10:FF:000022">
    <property type="entry name" value="Patatin like phospholipase domain containing 7"/>
    <property type="match status" value="1"/>
</dbReference>
<dbReference type="Gene3D" id="3.40.1090.10">
    <property type="entry name" value="Cytosolic phospholipase A2 catalytic domain"/>
    <property type="match status" value="1"/>
</dbReference>
<dbReference type="Gene3D" id="2.60.120.10">
    <property type="entry name" value="Jelly Rolls"/>
    <property type="match status" value="3"/>
</dbReference>
<dbReference type="InterPro" id="IPR016035">
    <property type="entry name" value="Acyl_Trfase/lysoPLipase"/>
</dbReference>
<dbReference type="InterPro" id="IPR000595">
    <property type="entry name" value="cNMP-bd_dom"/>
</dbReference>
<dbReference type="InterPro" id="IPR018490">
    <property type="entry name" value="cNMP-bd_dom_sf"/>
</dbReference>
<dbReference type="InterPro" id="IPR050301">
    <property type="entry name" value="NTE"/>
</dbReference>
<dbReference type="InterPro" id="IPR056556">
    <property type="entry name" value="NTE1_P-loop_dom"/>
</dbReference>
<dbReference type="InterPro" id="IPR002641">
    <property type="entry name" value="PNPLA_dom"/>
</dbReference>
<dbReference type="InterPro" id="IPR014710">
    <property type="entry name" value="RmlC-like_jellyroll"/>
</dbReference>
<dbReference type="PANTHER" id="PTHR14226">
    <property type="entry name" value="NEUROPATHY TARGET ESTERASE/SWISS CHEESE D.MELANOGASTER"/>
    <property type="match status" value="1"/>
</dbReference>
<dbReference type="PANTHER" id="PTHR14226:SF23">
    <property type="entry name" value="PATATIN-LIKE PHOSPHOLIPASE DOMAIN-CONTAINING PROTEIN 7"/>
    <property type="match status" value="1"/>
</dbReference>
<dbReference type="Pfam" id="PF00027">
    <property type="entry name" value="cNMP_binding"/>
    <property type="match status" value="3"/>
</dbReference>
<dbReference type="Pfam" id="PF24179">
    <property type="entry name" value="NTE_Ploop"/>
    <property type="match status" value="1"/>
</dbReference>
<dbReference type="Pfam" id="PF01734">
    <property type="entry name" value="Patatin"/>
    <property type="match status" value="1"/>
</dbReference>
<dbReference type="SMART" id="SM00100">
    <property type="entry name" value="cNMP"/>
    <property type="match status" value="3"/>
</dbReference>
<dbReference type="SUPFAM" id="SSF51206">
    <property type="entry name" value="cAMP-binding domain-like"/>
    <property type="match status" value="3"/>
</dbReference>
<dbReference type="SUPFAM" id="SSF52151">
    <property type="entry name" value="FabD/lysophospholipase-like"/>
    <property type="match status" value="1"/>
</dbReference>
<dbReference type="PROSITE" id="PS50042">
    <property type="entry name" value="CNMP_BINDING_3"/>
    <property type="match status" value="3"/>
</dbReference>
<dbReference type="PROSITE" id="PS51635">
    <property type="entry name" value="PNPLA"/>
    <property type="match status" value="1"/>
</dbReference>
<feature type="chain" id="PRO_0000293490" description="Patatin-like phospholipase domain-containing protein 7">
    <location>
        <begin position="1"/>
        <end position="1352"/>
    </location>
</feature>
<feature type="topological domain" description="Lumenal" evidence="9">
    <location>
        <begin position="1"/>
        <end position="36"/>
    </location>
</feature>
<feature type="transmembrane region" description="Helical" evidence="3">
    <location>
        <begin position="37"/>
        <end position="57"/>
    </location>
</feature>
<feature type="topological domain" description="Cytoplasmic" evidence="9">
    <location>
        <begin position="58"/>
        <end position="1352"/>
    </location>
</feature>
<feature type="domain" description="PNPLA" evidence="5">
    <location>
        <begin position="950"/>
        <end position="1116"/>
    </location>
</feature>
<feature type="region of interest" description="Disordered" evidence="6">
    <location>
        <begin position="340"/>
        <end position="364"/>
    </location>
</feature>
<feature type="region of interest" description="Disordered" evidence="6">
    <location>
        <begin position="384"/>
        <end position="411"/>
    </location>
</feature>
<feature type="region of interest" description="Involved in the binding to lipid droplets" evidence="9">
    <location>
        <begin position="681"/>
        <end position="967"/>
    </location>
</feature>
<feature type="region of interest" description="Disordered" evidence="6">
    <location>
        <begin position="1295"/>
        <end position="1352"/>
    </location>
</feature>
<feature type="short sequence motif" description="GXGXXG" evidence="5">
    <location>
        <begin position="954"/>
        <end position="959"/>
    </location>
</feature>
<feature type="short sequence motif" description="GXSXG" evidence="5">
    <location>
        <begin position="981"/>
        <end position="985"/>
    </location>
</feature>
<feature type="short sequence motif" description="DGA/G" evidence="5">
    <location>
        <begin position="1103"/>
        <end position="1105"/>
    </location>
</feature>
<feature type="compositionally biased region" description="Polar residues" evidence="6">
    <location>
        <begin position="394"/>
        <end position="406"/>
    </location>
</feature>
<feature type="compositionally biased region" description="Polar residues" evidence="6">
    <location>
        <begin position="1323"/>
        <end position="1334"/>
    </location>
</feature>
<feature type="active site" description="Nucleophile" evidence="5">
    <location>
        <position position="983"/>
    </location>
</feature>
<feature type="active site" description="Proton acceptor" evidence="5">
    <location>
        <position position="1103"/>
    </location>
</feature>
<feature type="binding site" evidence="4">
    <location>
        <begin position="170"/>
        <end position="297"/>
    </location>
    <ligand>
        <name>a nucleoside 3',5'-cyclic phosphate</name>
        <dbReference type="ChEBI" id="CHEBI:58464"/>
        <label>1</label>
    </ligand>
</feature>
<feature type="binding site" evidence="4">
    <location>
        <begin position="499"/>
        <end position="585"/>
    </location>
    <ligand>
        <name>a nucleoside 3',5'-cyclic phosphate</name>
        <dbReference type="ChEBI" id="CHEBI:58464"/>
        <label>2</label>
    </ligand>
</feature>
<feature type="binding site" evidence="4">
    <location>
        <begin position="613"/>
        <end position="718"/>
    </location>
    <ligand>
        <name>a nucleoside 3',5'-cyclic phosphate</name>
        <dbReference type="ChEBI" id="CHEBI:58464"/>
        <label>3</label>
    </ligand>
</feature>
<feature type="modified residue" description="Phosphoserine" evidence="13">
    <location>
        <position position="341"/>
    </location>
</feature>
<feature type="modified residue" description="Phosphoserine" evidence="2">
    <location>
        <position position="379"/>
    </location>
</feature>
<feature type="modified residue" description="Phosphoserine" evidence="14">
    <location>
        <position position="1280"/>
    </location>
</feature>
<feature type="modified residue" description="Phosphothreonine" evidence="1">
    <location>
        <position position="1284"/>
    </location>
</feature>
<feature type="splice variant" id="VSP_053967" description="In isoform 3." evidence="11">
    <original>GPVLLLTSDNIKQRLGSAALDSIHEYRLSSWLGQQEDIHRIVLYQADGTLTPWT</original>
    <variation>ASMSTGSPVGWASRRTSNGLCCIRQTAHSHRGPSAASGRLTASSSWAWVSKSQQ</variation>
    <location>
        <begin position="780"/>
        <end position="833"/>
    </location>
</feature>
<feature type="splice variant" id="VSP_053968" description="In isoform 3." evidence="11">
    <location>
        <begin position="834"/>
        <end position="1352"/>
    </location>
</feature>
<feature type="splice variant" id="VSP_026506" description="In isoform 2." evidence="10 11">
    <original>EYEPSMLQGPPSLT</original>
    <variation>VRNMSLRCCKDPPA</variation>
    <location>
        <begin position="1313"/>
        <end position="1326"/>
    </location>
</feature>
<feature type="splice variant" id="VSP_026507" description="In isoform 2." evidence="10 11">
    <location>
        <begin position="1327"/>
        <end position="1352"/>
    </location>
</feature>
<feature type="sequence conflict" description="In Ref. 3; AAH25621." evidence="12" ref="3">
    <original>RTKV</original>
    <variation>PRVR</variation>
    <location>
        <begin position="113"/>
        <end position="116"/>
    </location>
</feature>
<feature type="sequence conflict" description="In Ref. 1; BAE41783." evidence="12" ref="1">
    <original>S</original>
    <variation>R</variation>
    <location>
        <position position="237"/>
    </location>
</feature>
<feature type="sequence conflict" description="In Ref. 4; ABX89593/ABY82074/ABY89725." evidence="12" ref="4">
    <original>S</original>
    <variation>P</variation>
    <location>
        <position position="604"/>
    </location>
</feature>
<feature type="sequence conflict" description="In Ref. 1; BAE28519." evidence="12" ref="1">
    <original>D</original>
    <variation>N</variation>
    <location>
        <position position="1343"/>
    </location>
</feature>
<evidence type="ECO:0000250" key="1">
    <source>
        <dbReference type="UniProtKB" id="Q5BK26"/>
    </source>
</evidence>
<evidence type="ECO:0000250" key="2">
    <source>
        <dbReference type="UniProtKB" id="Q6ZV29"/>
    </source>
</evidence>
<evidence type="ECO:0000255" key="3"/>
<evidence type="ECO:0000255" key="4">
    <source>
        <dbReference type="PROSITE-ProRule" id="PRU00060"/>
    </source>
</evidence>
<evidence type="ECO:0000255" key="5">
    <source>
        <dbReference type="PROSITE-ProRule" id="PRU01161"/>
    </source>
</evidence>
<evidence type="ECO:0000256" key="6">
    <source>
        <dbReference type="SAM" id="MobiDB-lite"/>
    </source>
</evidence>
<evidence type="ECO:0000269" key="7">
    <source>
    </source>
</evidence>
<evidence type="ECO:0000269" key="8">
    <source>
    </source>
</evidence>
<evidence type="ECO:0000269" key="9">
    <source>
    </source>
</evidence>
<evidence type="ECO:0000303" key="10">
    <source>
    </source>
</evidence>
<evidence type="ECO:0000303" key="11">
    <source>
    </source>
</evidence>
<evidence type="ECO:0000305" key="12"/>
<evidence type="ECO:0007744" key="13">
    <source>
    </source>
</evidence>
<evidence type="ECO:0007744" key="14">
    <source>
    </source>
</evidence>
<sequence>MQNEEDACLEAGYCLGTTLSSWRLHFMEEQSQSTMLMGIGIGALLTLAFVGITFFFVYRRVRRLRRAEPTPQYRFRKRDKVMFYGRKIMRKVTTLPHTLVGNTSAPRQRVRKRTKVLSLAKRILRFKKEYPTLQPKEPPPSLLEADLTEFDVKNSHLPSEVLYMLKNVRVLGHFEKPLFLELCKHMVFVQLQEGEHVFQPGEPDISIYVVQDGRLEVCIQDADGTEVVVKEVLPGDSVHSLLSILDVITGHTAPYKTVSARAAVSSTVLWLPAAAFQGVFEKYPETLVRVVQIIMVRLQRVTFLALHNYLGLTTELFNPESQAIPLLSVASVAGRAKRQMSYGPEEQLERSLRPSEFSSSDHGSSCVTVSGPLLKRSCSVPLPSNHGEVDELRQSQGSGSNTSAFQESHEGATSDLGMAYNRARILPHSDEQLGNSLASKSKKSVVAETPSAIFHYSENFRDETGACGKTDAIFRAATKDLLTLMKLDDPSLLDGRVAFLHVPAGTLVSKQGDQDVNILFVVSGMLHVYQQKIDSLEDTCLFLTHPGEMVGQLAVLTGEPLMFTIRANRDCSFLSISKAHFYEIMRKRPDVVLGVAHTVVKRMSSFVRQIDFALDWMEVEAGRAIYRQGDKSDCTYIVLSGRLRSVIRKDDGKKRLAGEYGRGDLVGVVETLTHQARATTVHAVRDSELAKLPAGALTSIKRRYPQVVTRLIHLLGEKILGSLQQGSATGHQLGFNTASSKWDLGNPPGNLSTVAALPASEDVPLTAFALELQHALSAIGPVLLLTSDNIKQRLGSAALDSIHEYRLSSWLGQQEDIHRIVLYQADGTLTPWTQRCIRQADCILIVGLGEQEPAVGELEQMLESTAVRAQKQLILLHKEDGPVPSRTVEWLNMRSWCSGHLHLCCPRRVFSKRSLPKLVEMYTRVFQRPPDRHSDFSRLARMLTGNAIALVLGGGGARGCAQVGILRALAECGVPVDIIGGTSIGAFMGALFAEERSYSQTRIRAKQWAEGMTSMMKTILDLTYPITSMFSGTGFNSSISNIFKDRQIEDLWLPYFAITTDITASAMRVHTDGSLWRYVRASMSLSGYMPPLCDPKDGHLLMDGGYINNLPADVARSMGAKVVIAIDVGSRDETDLTNYGDALSGWWLLWKRWNPLATKVKVLNMAEIQTRLAYVCCVRQLEMVKNSDYCEYLRPPIDSYRTLDFGKFDEICEVGYQHGRTVFDIWVRSGVLEKMLQDQQGTSKRKDCGVFTCPNSSFTDLAEIVSRIEPAKVAAVDDESDYQTEYEEELPAIPKETYADFQSTGIELDSDSEYEPSMLQGPPSLTSPEQSQDSFPWLPNQDDQGPRLEHPS</sequence>
<name>PLPL7_MOUSE</name>
<gene>
    <name type="primary">Pnpla7</name>
</gene>
<comment type="function">
    <text evidence="7 8 9">Lysophospholipase which preferentially deacylates unsaturated lysophosphatidylcholine (C18:1), generating glycerophosphocholine (PubMed:18086666, PubMed:28887301). Can also deacylate, to a lesser extent, lysophosphatidylethanolamine (C18:1), lysophosphatidyl-L-serine (C18:1) and lysophosphatidic acid (C16:0) (PubMed:18086666, PubMed:22326266, PubMed:28887301).</text>
</comment>
<comment type="function">
    <molecule>Isoform 2</molecule>
    <text evidence="8">Lysophospholipase.</text>
</comment>
<comment type="function">
    <molecule>Isoform 3</molecule>
    <text evidence="8">Lacks lysophospholipase activity.</text>
</comment>
<comment type="catalytic activity">
    <reaction evidence="7 9">
        <text>a 1-acyl-sn-glycero-3-phosphocholine + H2O = sn-glycerol 3-phosphocholine + a fatty acid + H(+)</text>
        <dbReference type="Rhea" id="RHEA:15177"/>
        <dbReference type="ChEBI" id="CHEBI:15377"/>
        <dbReference type="ChEBI" id="CHEBI:15378"/>
        <dbReference type="ChEBI" id="CHEBI:16870"/>
        <dbReference type="ChEBI" id="CHEBI:28868"/>
        <dbReference type="ChEBI" id="CHEBI:58168"/>
        <dbReference type="EC" id="3.1.1.5"/>
    </reaction>
    <physiologicalReaction direction="left-to-right" evidence="7 9">
        <dbReference type="Rhea" id="RHEA:15178"/>
    </physiologicalReaction>
</comment>
<comment type="catalytic activity">
    <reaction evidence="9">
        <text>1-(9Z-octadecenoyl)-sn-glycero-3-phosphocholine + H2O = sn-glycerol 3-phosphocholine + (9Z)-octadecenoate + H(+)</text>
        <dbReference type="Rhea" id="RHEA:40807"/>
        <dbReference type="ChEBI" id="CHEBI:15377"/>
        <dbReference type="ChEBI" id="CHEBI:15378"/>
        <dbReference type="ChEBI" id="CHEBI:16870"/>
        <dbReference type="ChEBI" id="CHEBI:28610"/>
        <dbReference type="ChEBI" id="CHEBI:30823"/>
    </reaction>
    <physiologicalReaction direction="left-to-right" evidence="9">
        <dbReference type="Rhea" id="RHEA:40808"/>
    </physiologicalReaction>
</comment>
<comment type="catalytic activity">
    <reaction evidence="9">
        <text>1-(9Z-octadecenoyl)-sn-glycero-3-phosphoethanolamine + H2O = sn-glycero-3-phosphoethanolamine + (9Z)-octadecenoate + H(+)</text>
        <dbReference type="Rhea" id="RHEA:40895"/>
        <dbReference type="ChEBI" id="CHEBI:15377"/>
        <dbReference type="ChEBI" id="CHEBI:15378"/>
        <dbReference type="ChEBI" id="CHEBI:30823"/>
        <dbReference type="ChEBI" id="CHEBI:74971"/>
        <dbReference type="ChEBI" id="CHEBI:143890"/>
    </reaction>
    <physiologicalReaction direction="left-to-right" evidence="9">
        <dbReference type="Rhea" id="RHEA:40896"/>
    </physiologicalReaction>
</comment>
<comment type="catalytic activity">
    <reaction evidence="9">
        <text>1-(9Z-octadecenoyl)-sn-glycero-3-phospho-L-serine + H2O = sn-glycero-3-phospho-L-serine + (9Z)-octadecenoate + H(+)</text>
        <dbReference type="Rhea" id="RHEA:40499"/>
        <dbReference type="ChEBI" id="CHEBI:15377"/>
        <dbReference type="ChEBI" id="CHEBI:15378"/>
        <dbReference type="ChEBI" id="CHEBI:30823"/>
        <dbReference type="ChEBI" id="CHEBI:64765"/>
        <dbReference type="ChEBI" id="CHEBI:74617"/>
    </reaction>
    <physiologicalReaction direction="left-to-right" evidence="9">
        <dbReference type="Rhea" id="RHEA:40500"/>
    </physiologicalReaction>
</comment>
<comment type="catalytic activity">
    <reaction evidence="7">
        <text>1-hexadecanoyl-sn-glycero-3-phosphocholine + H2O = sn-glycerol 3-phosphocholine + hexadecanoate + H(+)</text>
        <dbReference type="Rhea" id="RHEA:40435"/>
        <dbReference type="ChEBI" id="CHEBI:7896"/>
        <dbReference type="ChEBI" id="CHEBI:15377"/>
        <dbReference type="ChEBI" id="CHEBI:15378"/>
        <dbReference type="ChEBI" id="CHEBI:16870"/>
        <dbReference type="ChEBI" id="CHEBI:72998"/>
    </reaction>
    <physiologicalReaction direction="left-to-right" evidence="7">
        <dbReference type="Rhea" id="RHEA:40436"/>
    </physiologicalReaction>
</comment>
<comment type="catalytic activity">
    <reaction evidence="7">
        <text>1-hexadecanoyl-sn-glycero-3-phosphate + H2O = sn-glycerol 3-phosphate + hexadecanoate + H(+)</text>
        <dbReference type="Rhea" id="RHEA:49092"/>
        <dbReference type="ChEBI" id="CHEBI:7896"/>
        <dbReference type="ChEBI" id="CHEBI:15377"/>
        <dbReference type="ChEBI" id="CHEBI:15378"/>
        <dbReference type="ChEBI" id="CHEBI:57518"/>
        <dbReference type="ChEBI" id="CHEBI:57597"/>
    </reaction>
    <physiologicalReaction direction="left-to-right" evidence="7">
        <dbReference type="Rhea" id="RHEA:49093"/>
    </physiologicalReaction>
</comment>
<comment type="activity regulation">
    <text evidence="7 9">cAMP does not regulate lysophospholipase activity in vitro (PubMed:18086666, PubMed:28887301). Slightly inhibited by organophosphorus (OP) compounds such as mipafox, which is likely why mice are less sensitive to distal axonophathy induced by OPs compared to humans (PubMed:18086666).</text>
</comment>
<comment type="biophysicochemical properties">
    <phDependence>
        <text evidence="7">Optimum pH is 8.5.</text>
    </phDependence>
</comment>
<comment type="subcellular location">
    <subcellularLocation>
        <location evidence="7 9">Endoplasmic reticulum membrane</location>
        <topology evidence="9">Single-pass type III membrane protein</topology>
    </subcellularLocation>
    <subcellularLocation>
        <location evidence="7 9">Lipid droplet</location>
    </subcellularLocation>
</comment>
<comment type="subcellular location">
    <molecule>Isoform 1</molecule>
    <subcellularLocation>
        <location evidence="8">Endoplasmic reticulum membrane</location>
        <topology evidence="12">Single-pass type III membrane protein</topology>
    </subcellularLocation>
</comment>
<comment type="subcellular location">
    <molecule>Isoform 2</molecule>
    <subcellularLocation>
        <location evidence="8">Endoplasmic reticulum membrane</location>
        <topology evidence="12">Single-pass type III membrane protein</topology>
    </subcellularLocation>
</comment>
<comment type="subcellular location">
    <molecule>Isoform 3</molecule>
    <subcellularLocation>
        <location evidence="8">Endoplasmic reticulum membrane</location>
        <topology evidence="12">Single-pass type III membrane protein</topology>
    </subcellularLocation>
</comment>
<comment type="alternative products">
    <event type="alternative splicing"/>
    <isoform>
        <id>A2AJ88-1</id>
        <name>1</name>
        <sequence type="displayed"/>
    </isoform>
    <isoform>
        <id>A2AJ88-2</id>
        <name>2</name>
        <name evidence="11">mNREV1</name>
        <sequence type="described" ref="VSP_026506 VSP_026507"/>
    </isoform>
    <isoform>
        <id>A2AJ88-3</id>
        <name>3</name>
        <name evidence="11">mNREV2</name>
        <sequence type="described" ref="VSP_053967 VSP_053968"/>
    </isoform>
</comment>
<comment type="tissue specificity">
    <molecule>Isoform 1</molecule>
    <text evidence="7 8">Expressed in white and brown adipose tissue, cardiac muscle, skeletal muscle, and testis.</text>
</comment>
<comment type="tissue specificity">
    <molecule>Isoform 2</molecule>
    <text evidence="8">Expressed in white adipose tissue, cardiac muscle, skeletal muscle, and testis.</text>
</comment>
<comment type="tissue specificity">
    <molecule>Isoform 3</molecule>
    <text evidence="8">Expressed in white adipose tissue, cardiac muscle, skeletal muscle, and testis.</text>
</comment>
<comment type="induction">
    <text evidence="7 8">By nutritional conditions (PubMed:18086666, PubMed:22326266). Expression of isoform 3 is switched to the expression of isoform 2 during fasting (PubMed:22326266).</text>
</comment>
<comment type="induction">
    <molecule>Isoform 1</molecule>
    <text evidence="8">Expression levels are not affected by fasting.</text>
</comment>
<comment type="induction">
    <molecule>Isoform 2</molecule>
    <text evidence="8">In white adipose tissue, cardiac muscle, skeletal muscle, and testis, expression levels are down-regulated under well-fed conditions and are up-regulated during fasting.</text>
</comment>
<comment type="induction">
    <molecule>Isoform 3</molecule>
    <text evidence="8">In white adipose tissue, cardiac muscle, skeletal muscle, and testis, expression levels are up-regulated under well-fed conditions and are down-regulated during fasting.</text>
</comment>
<comment type="domain">
    <text evidence="9">The 3 cNMP binding domains are required for localization to the endoplasmic reticulum (PubMed:28887301). The cNMP binding domain 3 is involved in the binding to lipid droplets (PubMed:28887301).</text>
</comment>
<comment type="similarity">
    <text evidence="12">Belongs to the NTE family.</text>
</comment>
<comment type="caution">
    <text evidence="12">It is uncertain whether Met-1 or Met-27 is the initiator.</text>
</comment>
<comment type="sequence caution" evidence="12">
    <conflict type="erroneous initiation">
        <sequence resource="EMBL-CDS" id="AAH27342"/>
    </conflict>
    <text>Truncated N-terminus.</text>
</comment>
<comment type="sequence caution" evidence="12">
    <conflict type="miscellaneous discrepancy">
        <sequence resource="EMBL-CDS" id="AAH27342"/>
    </conflict>
    <text>Intron retention.</text>
</comment>
<comment type="sequence caution" evidence="12">
    <conflict type="erroneous initiation">
        <sequence resource="EMBL-CDS" id="AAI41366"/>
    </conflict>
    <text>Truncated N-terminus.</text>
</comment>
<comment type="sequence caution" evidence="12">
    <conflict type="erroneous initiation">
        <sequence resource="EMBL-CDS" id="AAI41367"/>
    </conflict>
    <text>Truncated N-terminus.</text>
</comment>
<comment type="sequence caution" evidence="12">
    <conflict type="erroneous initiation">
        <sequence resource="EMBL-CDS" id="BAC40302"/>
    </conflict>
    <text>Truncated N-terminus.</text>
</comment>
<comment type="sequence caution" evidence="12">
    <conflict type="erroneous initiation">
        <sequence resource="EMBL-CDS" id="BAE28519"/>
    </conflict>
    <text>Extended N-terminus.</text>
</comment>
<comment type="sequence caution" evidence="12">
    <conflict type="erroneous initiation">
        <sequence resource="EMBL-CDS" id="BAE41783"/>
    </conflict>
    <text>Extended N-terminus.</text>
</comment>
<proteinExistence type="evidence at protein level"/>
<organism>
    <name type="scientific">Mus musculus</name>
    <name type="common">Mouse</name>
    <dbReference type="NCBI Taxonomy" id="10090"/>
    <lineage>
        <taxon>Eukaryota</taxon>
        <taxon>Metazoa</taxon>
        <taxon>Chordata</taxon>
        <taxon>Craniata</taxon>
        <taxon>Vertebrata</taxon>
        <taxon>Euteleostomi</taxon>
        <taxon>Mammalia</taxon>
        <taxon>Eutheria</taxon>
        <taxon>Euarchontoglires</taxon>
        <taxon>Glires</taxon>
        <taxon>Rodentia</taxon>
        <taxon>Myomorpha</taxon>
        <taxon>Muroidea</taxon>
        <taxon>Muridae</taxon>
        <taxon>Murinae</taxon>
        <taxon>Mus</taxon>
        <taxon>Mus</taxon>
    </lineage>
</organism>
<keyword id="KW-0025">Alternative splicing</keyword>
<keyword id="KW-0256">Endoplasmic reticulum</keyword>
<keyword id="KW-0378">Hydrolase</keyword>
<keyword id="KW-0442">Lipid degradation</keyword>
<keyword id="KW-0551">Lipid droplet</keyword>
<keyword id="KW-0443">Lipid metabolism</keyword>
<keyword id="KW-0472">Membrane</keyword>
<keyword id="KW-0597">Phosphoprotein</keyword>
<keyword id="KW-1185">Reference proteome</keyword>
<keyword id="KW-0677">Repeat</keyword>
<keyword id="KW-0812">Transmembrane</keyword>
<keyword id="KW-1133">Transmembrane helix</keyword>